<gene>
    <name type="primary">Eepd1</name>
</gene>
<reference key="1">
    <citation type="journal article" date="2004" name="Genome Res.">
        <title>The status, quality, and expansion of the NIH full-length cDNA project: the Mammalian Gene Collection (MGC).</title>
        <authorList>
            <consortium name="The MGC Project Team"/>
        </authorList>
    </citation>
    <scope>NUCLEOTIDE SEQUENCE [LARGE SCALE MRNA]</scope>
    <source>
        <tissue>Kidney</tissue>
        <tissue>Thymus</tissue>
    </source>
</reference>
<reference key="2">
    <citation type="journal article" date="2012" name="Nat. Commun.">
        <title>Quantitative maps of protein phosphorylation sites across 14 different rat organs and tissues.</title>
        <authorList>
            <person name="Lundby A."/>
            <person name="Secher A."/>
            <person name="Lage K."/>
            <person name="Nordsborg N.B."/>
            <person name="Dmytriyev A."/>
            <person name="Lundby C."/>
            <person name="Olsen J.V."/>
        </authorList>
    </citation>
    <scope>PHOSPHORYLATION [LARGE SCALE ANALYSIS] AT SER-21; SER-106; SER-110 AND SER-173</scope>
    <scope>IDENTIFICATION BY MASS SPECTROMETRY [LARGE SCALE ANALYSIS]</scope>
</reference>
<name>EEPD1_RAT</name>
<keyword id="KW-0449">Lipoprotein</keyword>
<keyword id="KW-0519">Myristate</keyword>
<keyword id="KW-0597">Phosphoprotein</keyword>
<keyword id="KW-1185">Reference proteome</keyword>
<proteinExistence type="evidence at protein level"/>
<accession>Q5XI74</accession>
<organism>
    <name type="scientific">Rattus norvegicus</name>
    <name type="common">Rat</name>
    <dbReference type="NCBI Taxonomy" id="10116"/>
    <lineage>
        <taxon>Eukaryota</taxon>
        <taxon>Metazoa</taxon>
        <taxon>Chordata</taxon>
        <taxon>Craniata</taxon>
        <taxon>Vertebrata</taxon>
        <taxon>Euteleostomi</taxon>
        <taxon>Mammalia</taxon>
        <taxon>Eutheria</taxon>
        <taxon>Euarchontoglires</taxon>
        <taxon>Glires</taxon>
        <taxon>Rodentia</taxon>
        <taxon>Myomorpha</taxon>
        <taxon>Muroidea</taxon>
        <taxon>Muridae</taxon>
        <taxon>Murinae</taxon>
        <taxon>Rattus</taxon>
    </lineage>
</organism>
<feature type="initiator methionine" description="Removed" evidence="3">
    <location>
        <position position="1"/>
    </location>
</feature>
<feature type="chain" id="PRO_0000317263" description="Endonuclease/exonuclease/phosphatase family domain-containing protein 1">
    <location>
        <begin position="2"/>
        <end position="569"/>
    </location>
</feature>
<feature type="domain" description="HhH">
    <location>
        <begin position="38"/>
        <end position="67"/>
    </location>
</feature>
<feature type="region of interest" description="Disordered" evidence="4">
    <location>
        <begin position="1"/>
        <end position="20"/>
    </location>
</feature>
<feature type="region of interest" description="Disordered" evidence="4">
    <location>
        <begin position="200"/>
        <end position="224"/>
    </location>
</feature>
<feature type="region of interest" description="Disordered" evidence="4">
    <location>
        <begin position="548"/>
        <end position="569"/>
    </location>
</feature>
<feature type="compositionally biased region" description="Basic and acidic residues" evidence="4">
    <location>
        <begin position="11"/>
        <end position="20"/>
    </location>
</feature>
<feature type="compositionally biased region" description="Polar residues" evidence="4">
    <location>
        <begin position="202"/>
        <end position="211"/>
    </location>
</feature>
<feature type="modified residue" description="Phosphoserine" evidence="3">
    <location>
        <position position="16"/>
    </location>
</feature>
<feature type="modified residue" description="Phosphoserine" evidence="5">
    <location>
        <position position="21"/>
    </location>
</feature>
<feature type="modified residue" description="Phosphoserine" evidence="3">
    <location>
        <position position="25"/>
    </location>
</feature>
<feature type="modified residue" description="Phosphoserine" evidence="5">
    <location>
        <position position="106"/>
    </location>
</feature>
<feature type="modified residue" description="Phosphoserine" evidence="5">
    <location>
        <position position="110"/>
    </location>
</feature>
<feature type="modified residue" description="Phosphoserine" evidence="3">
    <location>
        <position position="160"/>
    </location>
</feature>
<feature type="modified residue" description="Phosphoserine" evidence="5">
    <location>
        <position position="173"/>
    </location>
</feature>
<feature type="modified residue" description="Phosphothreonine" evidence="2">
    <location>
        <position position="265"/>
    </location>
</feature>
<feature type="lipid moiety-binding region" description="N-myristoyl glycine" evidence="1">
    <location>
        <position position="2"/>
    </location>
</feature>
<dbReference type="EMBL" id="BC083816">
    <property type="protein sequence ID" value="AAH83816.1"/>
    <property type="molecule type" value="mRNA"/>
</dbReference>
<dbReference type="EMBL" id="BC099214">
    <property type="protein sequence ID" value="AAH99214.1"/>
    <property type="molecule type" value="mRNA"/>
</dbReference>
<dbReference type="RefSeq" id="NP_001014110.1">
    <property type="nucleotide sequence ID" value="NM_001014088.4"/>
</dbReference>
<dbReference type="RefSeq" id="XP_006242788.1">
    <property type="nucleotide sequence ID" value="XM_006242726.3"/>
</dbReference>
<dbReference type="SMR" id="Q5XI74"/>
<dbReference type="FunCoup" id="Q5XI74">
    <property type="interactions" value="196"/>
</dbReference>
<dbReference type="STRING" id="10116.ENSRNOP00000009342"/>
<dbReference type="iPTMnet" id="Q5XI74"/>
<dbReference type="PhosphoSitePlus" id="Q5XI74"/>
<dbReference type="SwissPalm" id="Q5XI74"/>
<dbReference type="PaxDb" id="10116-ENSRNOP00000009342"/>
<dbReference type="Ensembl" id="ENSRNOT00000009342.6">
    <property type="protein sequence ID" value="ENSRNOP00000009342.5"/>
    <property type="gene ID" value="ENSRNOG00000006931.6"/>
</dbReference>
<dbReference type="GeneID" id="315500"/>
<dbReference type="KEGG" id="rno:315500"/>
<dbReference type="UCSC" id="RGD:1307401">
    <property type="organism name" value="rat"/>
</dbReference>
<dbReference type="AGR" id="RGD:1307401"/>
<dbReference type="CTD" id="80820"/>
<dbReference type="RGD" id="1307401">
    <property type="gene designation" value="Eepd1"/>
</dbReference>
<dbReference type="eggNOG" id="KOG1857">
    <property type="taxonomic scope" value="Eukaryota"/>
</dbReference>
<dbReference type="GeneTree" id="ENSGT00390000009677"/>
<dbReference type="HOGENOM" id="CLU_033721_1_0_1"/>
<dbReference type="InParanoid" id="Q5XI74"/>
<dbReference type="OMA" id="HLVPANT"/>
<dbReference type="OrthoDB" id="6237065at2759"/>
<dbReference type="PhylomeDB" id="Q5XI74"/>
<dbReference type="TreeFam" id="TF328735"/>
<dbReference type="PRO" id="PR:Q5XI74"/>
<dbReference type="Proteomes" id="UP000002494">
    <property type="component" value="Chromosome 8"/>
</dbReference>
<dbReference type="Bgee" id="ENSRNOG00000006931">
    <property type="expression patterns" value="Expressed in skeletal muscle tissue and 18 other cell types or tissues"/>
</dbReference>
<dbReference type="GO" id="GO:0005886">
    <property type="term" value="C:plasma membrane"/>
    <property type="evidence" value="ECO:0000266"/>
    <property type="project" value="RGD"/>
</dbReference>
<dbReference type="GO" id="GO:0003824">
    <property type="term" value="F:catalytic activity"/>
    <property type="evidence" value="ECO:0007669"/>
    <property type="project" value="InterPro"/>
</dbReference>
<dbReference type="GO" id="GO:0003677">
    <property type="term" value="F:DNA binding"/>
    <property type="evidence" value="ECO:0007669"/>
    <property type="project" value="InterPro"/>
</dbReference>
<dbReference type="GO" id="GO:0006281">
    <property type="term" value="P:DNA repair"/>
    <property type="evidence" value="ECO:0007669"/>
    <property type="project" value="InterPro"/>
</dbReference>
<dbReference type="GO" id="GO:0010875">
    <property type="term" value="P:positive regulation of cholesterol efflux"/>
    <property type="evidence" value="ECO:0000266"/>
    <property type="project" value="RGD"/>
</dbReference>
<dbReference type="CDD" id="cd10283">
    <property type="entry name" value="MnuA_DNase1-like"/>
    <property type="match status" value="1"/>
</dbReference>
<dbReference type="Gene3D" id="1.10.150.280">
    <property type="entry name" value="AF1531-like domain"/>
    <property type="match status" value="1"/>
</dbReference>
<dbReference type="Gene3D" id="3.60.10.10">
    <property type="entry name" value="Endonuclease/exonuclease/phosphatase"/>
    <property type="match status" value="1"/>
</dbReference>
<dbReference type="Gene3D" id="1.10.150.320">
    <property type="entry name" value="Photosystem II 12 kDa extrinsic protein"/>
    <property type="match status" value="1"/>
</dbReference>
<dbReference type="InterPro" id="IPR004509">
    <property type="entry name" value="Competence_ComEA_HhH"/>
</dbReference>
<dbReference type="InterPro" id="IPR051675">
    <property type="entry name" value="Endo/Exo/Phosphatase_dom_1"/>
</dbReference>
<dbReference type="InterPro" id="IPR036691">
    <property type="entry name" value="Endo/exonu/phosph_ase_sf"/>
</dbReference>
<dbReference type="InterPro" id="IPR005135">
    <property type="entry name" value="Endo/exonuclease/phosphatase"/>
</dbReference>
<dbReference type="InterPro" id="IPR003583">
    <property type="entry name" value="Hlx-hairpin-Hlx_DNA-bd_motif"/>
</dbReference>
<dbReference type="InterPro" id="IPR010994">
    <property type="entry name" value="RuvA_2-like"/>
</dbReference>
<dbReference type="NCBIfam" id="TIGR00426">
    <property type="entry name" value="competence protein ComEA helix-hairpin-helix repeat region"/>
    <property type="match status" value="1"/>
</dbReference>
<dbReference type="PANTHER" id="PTHR21180">
    <property type="entry name" value="ENDONUCLEASE/EXONUCLEASE/PHOSPHATASE FAMILY DOMAIN-CONTAINING PROTEIN 1"/>
    <property type="match status" value="1"/>
</dbReference>
<dbReference type="PANTHER" id="PTHR21180:SF32">
    <property type="entry name" value="ENDONUCLEASE_EXONUCLEASE_PHOSPHATASE FAMILY DOMAIN-CONTAINING PROTEIN 1"/>
    <property type="match status" value="1"/>
</dbReference>
<dbReference type="Pfam" id="PF03372">
    <property type="entry name" value="Exo_endo_phos"/>
    <property type="match status" value="1"/>
</dbReference>
<dbReference type="Pfam" id="PF12836">
    <property type="entry name" value="HHH_3"/>
    <property type="match status" value="2"/>
</dbReference>
<dbReference type="SMART" id="SM00278">
    <property type="entry name" value="HhH1"/>
    <property type="match status" value="3"/>
</dbReference>
<dbReference type="SUPFAM" id="SSF56219">
    <property type="entry name" value="DNase I-like"/>
    <property type="match status" value="1"/>
</dbReference>
<dbReference type="SUPFAM" id="SSF47781">
    <property type="entry name" value="RuvA domain 2-like"/>
    <property type="match status" value="2"/>
</dbReference>
<sequence length="569" mass="62868">MGSTLGCHRSIPRDPSDLSHSRKFSAACNFSNILVNQERLNINTATEEELMTLPGVTRAVARSIVEYREYIGGFKKVEDLALVSGVGATKLEQVKFEICVSSKGNSAQHSPSSLRRDLLAEQQPHHLATTVPLTPRVNINTATLAQLMSVRGLSEKMAVSIVDYRREHGPFRSVEDLVRMDGINAAFLDRIRHQVFAERSRPPSTHTNGGLTFTAKPHPSPTSLSLQSEDLDLPPGGPTQIISMRPSVEAFGGMRDGRPVFRLATWNLQGCSVEKANNPGVREVVCMTLLENSIKLLAVQELLDKEALEKFCTELNQPILPNIRKWKGPRGCWRSIVAEKPSSQLQKGPCYSGFLWDTAANVELRDIPGQESSPSNGHAKTVGPSPFLARFKVGSNDLTLVNLQLTALALPGVENSSKNHSDGHRLLNFALTLQETLKGEKDVVILGDFGQGPDSSDYDILRREKFHHLIPAHTFTNISTRNPQGSKSVDNIWISKSLKKVFTGHWAVVREGLTNPWIPDNWSWGGVASEHCPVLAELYMEKDWSKKEVPRNGNGVTLEPSEANVKHER</sequence>
<protein>
    <recommendedName>
        <fullName>Endonuclease/exonuclease/phosphatase family domain-containing protein 1</fullName>
    </recommendedName>
</protein>
<evidence type="ECO:0000250" key="1"/>
<evidence type="ECO:0000250" key="2">
    <source>
        <dbReference type="UniProtKB" id="Q3TGW2"/>
    </source>
</evidence>
<evidence type="ECO:0000250" key="3">
    <source>
        <dbReference type="UniProtKB" id="Q7L9B9"/>
    </source>
</evidence>
<evidence type="ECO:0000256" key="4">
    <source>
        <dbReference type="SAM" id="MobiDB-lite"/>
    </source>
</evidence>
<evidence type="ECO:0007744" key="5">
    <source>
    </source>
</evidence>